<organism>
    <name type="scientific">Acinetobacter baumannii (strain ATCC 17978 / DSM 105126 / CIP 53.77 / LMG 1025 / NCDC KC755 / 5377)</name>
    <dbReference type="NCBI Taxonomy" id="400667"/>
    <lineage>
        <taxon>Bacteria</taxon>
        <taxon>Pseudomonadati</taxon>
        <taxon>Pseudomonadota</taxon>
        <taxon>Gammaproteobacteria</taxon>
        <taxon>Moraxellales</taxon>
        <taxon>Moraxellaceae</taxon>
        <taxon>Acinetobacter</taxon>
        <taxon>Acinetobacter calcoaceticus/baumannii complex</taxon>
    </lineage>
</organism>
<name>LEUC_ACIBT</name>
<dbReference type="EC" id="4.2.1.33" evidence="1"/>
<dbReference type="EMBL" id="CP000521">
    <property type="protein sequence ID" value="ABO10872.2"/>
    <property type="molecule type" value="Genomic_DNA"/>
</dbReference>
<dbReference type="RefSeq" id="WP_000907608.1">
    <property type="nucleotide sequence ID" value="NZ_CACVBA010000001.1"/>
</dbReference>
<dbReference type="SMR" id="A3M1S8"/>
<dbReference type="KEGG" id="acb:A1S_0417"/>
<dbReference type="HOGENOM" id="CLU_006714_3_4_6"/>
<dbReference type="UniPathway" id="UPA00048">
    <property type="reaction ID" value="UER00071"/>
</dbReference>
<dbReference type="GO" id="GO:0003861">
    <property type="term" value="F:3-isopropylmalate dehydratase activity"/>
    <property type="evidence" value="ECO:0007669"/>
    <property type="project" value="UniProtKB-UniRule"/>
</dbReference>
<dbReference type="GO" id="GO:0051539">
    <property type="term" value="F:4 iron, 4 sulfur cluster binding"/>
    <property type="evidence" value="ECO:0007669"/>
    <property type="project" value="UniProtKB-KW"/>
</dbReference>
<dbReference type="GO" id="GO:0046872">
    <property type="term" value="F:metal ion binding"/>
    <property type="evidence" value="ECO:0007669"/>
    <property type="project" value="UniProtKB-KW"/>
</dbReference>
<dbReference type="GO" id="GO:0009098">
    <property type="term" value="P:L-leucine biosynthetic process"/>
    <property type="evidence" value="ECO:0007669"/>
    <property type="project" value="UniProtKB-UniRule"/>
</dbReference>
<dbReference type="CDD" id="cd01583">
    <property type="entry name" value="IPMI"/>
    <property type="match status" value="1"/>
</dbReference>
<dbReference type="FunFam" id="3.30.499.10:FF:000007">
    <property type="entry name" value="3-isopropylmalate dehydratase large subunit"/>
    <property type="match status" value="1"/>
</dbReference>
<dbReference type="Gene3D" id="3.30.499.10">
    <property type="entry name" value="Aconitase, domain 3"/>
    <property type="match status" value="2"/>
</dbReference>
<dbReference type="HAMAP" id="MF_01026">
    <property type="entry name" value="LeuC_type1"/>
    <property type="match status" value="1"/>
</dbReference>
<dbReference type="InterPro" id="IPR004430">
    <property type="entry name" value="3-IsopropMal_deHydase_lsu"/>
</dbReference>
<dbReference type="InterPro" id="IPR015931">
    <property type="entry name" value="Acnase/IPM_dHydase_lsu_aba_1/3"/>
</dbReference>
<dbReference type="InterPro" id="IPR001030">
    <property type="entry name" value="Acoase/IPM_deHydtase_lsu_aba"/>
</dbReference>
<dbReference type="InterPro" id="IPR018136">
    <property type="entry name" value="Aconitase_4Fe-4S_BS"/>
</dbReference>
<dbReference type="InterPro" id="IPR036008">
    <property type="entry name" value="Aconitase_4Fe-4S_dom"/>
</dbReference>
<dbReference type="InterPro" id="IPR050067">
    <property type="entry name" value="IPM_dehydratase_rel_enz"/>
</dbReference>
<dbReference type="InterPro" id="IPR033941">
    <property type="entry name" value="IPMI_cat"/>
</dbReference>
<dbReference type="NCBIfam" id="TIGR00170">
    <property type="entry name" value="leuC"/>
    <property type="match status" value="1"/>
</dbReference>
<dbReference type="NCBIfam" id="NF004016">
    <property type="entry name" value="PRK05478.1"/>
    <property type="match status" value="1"/>
</dbReference>
<dbReference type="NCBIfam" id="NF009116">
    <property type="entry name" value="PRK12466.1"/>
    <property type="match status" value="1"/>
</dbReference>
<dbReference type="PANTHER" id="PTHR43822:SF9">
    <property type="entry name" value="3-ISOPROPYLMALATE DEHYDRATASE"/>
    <property type="match status" value="1"/>
</dbReference>
<dbReference type="PANTHER" id="PTHR43822">
    <property type="entry name" value="HOMOACONITASE, MITOCHONDRIAL-RELATED"/>
    <property type="match status" value="1"/>
</dbReference>
<dbReference type="Pfam" id="PF00330">
    <property type="entry name" value="Aconitase"/>
    <property type="match status" value="1"/>
</dbReference>
<dbReference type="PRINTS" id="PR00415">
    <property type="entry name" value="ACONITASE"/>
</dbReference>
<dbReference type="SUPFAM" id="SSF53732">
    <property type="entry name" value="Aconitase iron-sulfur domain"/>
    <property type="match status" value="1"/>
</dbReference>
<dbReference type="PROSITE" id="PS00450">
    <property type="entry name" value="ACONITASE_1"/>
    <property type="match status" value="1"/>
</dbReference>
<dbReference type="PROSITE" id="PS01244">
    <property type="entry name" value="ACONITASE_2"/>
    <property type="match status" value="1"/>
</dbReference>
<comment type="function">
    <text evidence="1">Catalyzes the isomerization between 2-isopropylmalate and 3-isopropylmalate, via the formation of 2-isopropylmaleate.</text>
</comment>
<comment type="catalytic activity">
    <reaction evidence="1">
        <text>(2R,3S)-3-isopropylmalate = (2S)-2-isopropylmalate</text>
        <dbReference type="Rhea" id="RHEA:32287"/>
        <dbReference type="ChEBI" id="CHEBI:1178"/>
        <dbReference type="ChEBI" id="CHEBI:35121"/>
        <dbReference type="EC" id="4.2.1.33"/>
    </reaction>
</comment>
<comment type="cofactor">
    <cofactor evidence="1">
        <name>[4Fe-4S] cluster</name>
        <dbReference type="ChEBI" id="CHEBI:49883"/>
    </cofactor>
    <text evidence="1">Binds 1 [4Fe-4S] cluster per subunit.</text>
</comment>
<comment type="pathway">
    <text evidence="1">Amino-acid biosynthesis; L-leucine biosynthesis; L-leucine from 3-methyl-2-oxobutanoate: step 2/4.</text>
</comment>
<comment type="subunit">
    <text evidence="1">Heterodimer of LeuC and LeuD.</text>
</comment>
<comment type="similarity">
    <text evidence="1">Belongs to the aconitase/IPM isomerase family. LeuC type 1 subfamily.</text>
</comment>
<proteinExistence type="inferred from homology"/>
<sequence>MAGKTLYDKLWDDHVVTQRDDGSCLLYIDRHLLHEVTSPQAFEGLQLAGRQPWRLSANVATPDHNVPTSKKERDQGIAGIEDDTSRIQVQTLDDNCKAFNIVEFGINDIRQGIVHVVGPEQGLTLPGMTVVCGDSHTATHGAFGCLAHGIGTSEVEHVLATQCLVQKKSKNMLVRVDGVLGKGVTPKDVVLAIIGKIGTAGGTGYAIEFGGQVFRDMSIEGRMTVCNMAIEAGARVGMVAVDEKTIEYVKGRSYAPKGEQWDQAVAYWNTLHSDDDAVFDAVVELNGTEIEPQVSWGTSPEMVIPVSKAVPTLEQAKDDVQRNDWTRAYQYMGLNAGQALADIQLDRVFIGSCTNSRIEDIRAAAEVVKGRKVAPSIKQAMIVPGSGLVKQQAEKEGLDKIFLEAGFEWREPGCSMCLAMNADKLQPGEHCASTSNRNFEGRQGNGGRTHLVSPAMAAAAAIAGHFVDVRSF</sequence>
<reference key="1">
    <citation type="journal article" date="2007" name="Genes Dev.">
        <title>New insights into Acinetobacter baumannii pathogenesis revealed by high-density pyrosequencing and transposon mutagenesis.</title>
        <authorList>
            <person name="Smith M.G."/>
            <person name="Gianoulis T.A."/>
            <person name="Pukatzki S."/>
            <person name="Mekalanos J.J."/>
            <person name="Ornston L.N."/>
            <person name="Gerstein M."/>
            <person name="Snyder M."/>
        </authorList>
    </citation>
    <scope>NUCLEOTIDE SEQUENCE [LARGE SCALE GENOMIC DNA]</scope>
    <source>
        <strain>ATCC 17978 / DSM 105126 / CIP 53.77 / LMG 1025 / NCDC KC755 / 5377</strain>
    </source>
</reference>
<keyword id="KW-0004">4Fe-4S</keyword>
<keyword id="KW-0028">Amino-acid biosynthesis</keyword>
<keyword id="KW-0100">Branched-chain amino acid biosynthesis</keyword>
<keyword id="KW-0408">Iron</keyword>
<keyword id="KW-0411">Iron-sulfur</keyword>
<keyword id="KW-0432">Leucine biosynthesis</keyword>
<keyword id="KW-0456">Lyase</keyword>
<keyword id="KW-0479">Metal-binding</keyword>
<feature type="chain" id="PRO_1000063517" description="3-isopropylmalate dehydratase large subunit">
    <location>
        <begin position="1"/>
        <end position="472"/>
    </location>
</feature>
<feature type="binding site" evidence="1">
    <location>
        <position position="353"/>
    </location>
    <ligand>
        <name>[4Fe-4S] cluster</name>
        <dbReference type="ChEBI" id="CHEBI:49883"/>
    </ligand>
</feature>
<feature type="binding site" evidence="1">
    <location>
        <position position="414"/>
    </location>
    <ligand>
        <name>[4Fe-4S] cluster</name>
        <dbReference type="ChEBI" id="CHEBI:49883"/>
    </ligand>
</feature>
<feature type="binding site" evidence="1">
    <location>
        <position position="417"/>
    </location>
    <ligand>
        <name>[4Fe-4S] cluster</name>
        <dbReference type="ChEBI" id="CHEBI:49883"/>
    </ligand>
</feature>
<accession>A3M1S8</accession>
<gene>
    <name evidence="1" type="primary">leuC</name>
    <name type="ordered locus">A1S_0417</name>
</gene>
<protein>
    <recommendedName>
        <fullName evidence="1">3-isopropylmalate dehydratase large subunit</fullName>
        <ecNumber evidence="1">4.2.1.33</ecNumber>
    </recommendedName>
    <alternativeName>
        <fullName evidence="1">Alpha-IPM isomerase</fullName>
        <shortName evidence="1">IPMI</shortName>
    </alternativeName>
    <alternativeName>
        <fullName evidence="1">Isopropylmalate isomerase</fullName>
    </alternativeName>
</protein>
<evidence type="ECO:0000255" key="1">
    <source>
        <dbReference type="HAMAP-Rule" id="MF_01026"/>
    </source>
</evidence>